<gene>
    <name evidence="1" type="primary">rpmC</name>
    <name type="ordered locus">ECIAI39_3806</name>
</gene>
<comment type="similarity">
    <text evidence="1">Belongs to the universal ribosomal protein uL29 family.</text>
</comment>
<organism>
    <name type="scientific">Escherichia coli O7:K1 (strain IAI39 / ExPEC)</name>
    <dbReference type="NCBI Taxonomy" id="585057"/>
    <lineage>
        <taxon>Bacteria</taxon>
        <taxon>Pseudomonadati</taxon>
        <taxon>Pseudomonadota</taxon>
        <taxon>Gammaproteobacteria</taxon>
        <taxon>Enterobacterales</taxon>
        <taxon>Enterobacteriaceae</taxon>
        <taxon>Escherichia</taxon>
    </lineage>
</organism>
<evidence type="ECO:0000255" key="1">
    <source>
        <dbReference type="HAMAP-Rule" id="MF_00374"/>
    </source>
</evidence>
<evidence type="ECO:0000305" key="2"/>
<sequence length="63" mass="7273">MKAKELREKSVEELNTELLNLLREQFNLRMQAASGQLQQSHLLKQVRRDVARVKTLLNEKAGA</sequence>
<name>RL29_ECO7I</name>
<proteinExistence type="inferred from homology"/>
<keyword id="KW-0687">Ribonucleoprotein</keyword>
<keyword id="KW-0689">Ribosomal protein</keyword>
<feature type="chain" id="PRO_1000121766" description="Large ribosomal subunit protein uL29">
    <location>
        <begin position="1"/>
        <end position="63"/>
    </location>
</feature>
<reference key="1">
    <citation type="journal article" date="2009" name="PLoS Genet.">
        <title>Organised genome dynamics in the Escherichia coli species results in highly diverse adaptive paths.</title>
        <authorList>
            <person name="Touchon M."/>
            <person name="Hoede C."/>
            <person name="Tenaillon O."/>
            <person name="Barbe V."/>
            <person name="Baeriswyl S."/>
            <person name="Bidet P."/>
            <person name="Bingen E."/>
            <person name="Bonacorsi S."/>
            <person name="Bouchier C."/>
            <person name="Bouvet O."/>
            <person name="Calteau A."/>
            <person name="Chiapello H."/>
            <person name="Clermont O."/>
            <person name="Cruveiller S."/>
            <person name="Danchin A."/>
            <person name="Diard M."/>
            <person name="Dossat C."/>
            <person name="Karoui M.E."/>
            <person name="Frapy E."/>
            <person name="Garry L."/>
            <person name="Ghigo J.M."/>
            <person name="Gilles A.M."/>
            <person name="Johnson J."/>
            <person name="Le Bouguenec C."/>
            <person name="Lescat M."/>
            <person name="Mangenot S."/>
            <person name="Martinez-Jehanne V."/>
            <person name="Matic I."/>
            <person name="Nassif X."/>
            <person name="Oztas S."/>
            <person name="Petit M.A."/>
            <person name="Pichon C."/>
            <person name="Rouy Z."/>
            <person name="Ruf C.S."/>
            <person name="Schneider D."/>
            <person name="Tourret J."/>
            <person name="Vacherie B."/>
            <person name="Vallenet D."/>
            <person name="Medigue C."/>
            <person name="Rocha E.P.C."/>
            <person name="Denamur E."/>
        </authorList>
    </citation>
    <scope>NUCLEOTIDE SEQUENCE [LARGE SCALE GENOMIC DNA]</scope>
    <source>
        <strain>IAI39 / ExPEC</strain>
    </source>
</reference>
<dbReference type="EMBL" id="CU928164">
    <property type="protein sequence ID" value="CAR19920.1"/>
    <property type="molecule type" value="Genomic_DNA"/>
</dbReference>
<dbReference type="RefSeq" id="WP_000644741.1">
    <property type="nucleotide sequence ID" value="NC_011750.1"/>
</dbReference>
<dbReference type="RefSeq" id="YP_002409703.1">
    <property type="nucleotide sequence ID" value="NC_011750.1"/>
</dbReference>
<dbReference type="SMR" id="B7NLN1"/>
<dbReference type="STRING" id="585057.ECIAI39_3806"/>
<dbReference type="GeneID" id="93778675"/>
<dbReference type="KEGG" id="ect:ECIAI39_3806"/>
<dbReference type="PATRIC" id="fig|585057.6.peg.3943"/>
<dbReference type="HOGENOM" id="CLU_158491_1_2_6"/>
<dbReference type="Proteomes" id="UP000000749">
    <property type="component" value="Chromosome"/>
</dbReference>
<dbReference type="GO" id="GO:0022625">
    <property type="term" value="C:cytosolic large ribosomal subunit"/>
    <property type="evidence" value="ECO:0007669"/>
    <property type="project" value="TreeGrafter"/>
</dbReference>
<dbReference type="GO" id="GO:0003735">
    <property type="term" value="F:structural constituent of ribosome"/>
    <property type="evidence" value="ECO:0007669"/>
    <property type="project" value="InterPro"/>
</dbReference>
<dbReference type="GO" id="GO:0006412">
    <property type="term" value="P:translation"/>
    <property type="evidence" value="ECO:0007669"/>
    <property type="project" value="UniProtKB-UniRule"/>
</dbReference>
<dbReference type="CDD" id="cd00427">
    <property type="entry name" value="Ribosomal_L29_HIP"/>
    <property type="match status" value="1"/>
</dbReference>
<dbReference type="Gene3D" id="6.10.140.1970">
    <property type="match status" value="1"/>
</dbReference>
<dbReference type="HAMAP" id="MF_00374">
    <property type="entry name" value="Ribosomal_uL29"/>
    <property type="match status" value="1"/>
</dbReference>
<dbReference type="InterPro" id="IPR050063">
    <property type="entry name" value="Ribosomal_protein_uL29"/>
</dbReference>
<dbReference type="InterPro" id="IPR001854">
    <property type="entry name" value="Ribosomal_uL29"/>
</dbReference>
<dbReference type="InterPro" id="IPR018254">
    <property type="entry name" value="Ribosomal_uL29_CS"/>
</dbReference>
<dbReference type="InterPro" id="IPR036049">
    <property type="entry name" value="Ribosomal_uL29_sf"/>
</dbReference>
<dbReference type="NCBIfam" id="TIGR00012">
    <property type="entry name" value="L29"/>
    <property type="match status" value="1"/>
</dbReference>
<dbReference type="PANTHER" id="PTHR10916">
    <property type="entry name" value="60S RIBOSOMAL PROTEIN L35/50S RIBOSOMAL PROTEIN L29"/>
    <property type="match status" value="1"/>
</dbReference>
<dbReference type="PANTHER" id="PTHR10916:SF0">
    <property type="entry name" value="LARGE RIBOSOMAL SUBUNIT PROTEIN UL29C"/>
    <property type="match status" value="1"/>
</dbReference>
<dbReference type="Pfam" id="PF00831">
    <property type="entry name" value="Ribosomal_L29"/>
    <property type="match status" value="1"/>
</dbReference>
<dbReference type="SUPFAM" id="SSF46561">
    <property type="entry name" value="Ribosomal protein L29 (L29p)"/>
    <property type="match status" value="1"/>
</dbReference>
<dbReference type="PROSITE" id="PS00579">
    <property type="entry name" value="RIBOSOMAL_L29"/>
    <property type="match status" value="1"/>
</dbReference>
<protein>
    <recommendedName>
        <fullName evidence="1">Large ribosomal subunit protein uL29</fullName>
    </recommendedName>
    <alternativeName>
        <fullName evidence="2">50S ribosomal protein L29</fullName>
    </alternativeName>
</protein>
<accession>B7NLN1</accession>